<evidence type="ECO:0000255" key="1"/>
<evidence type="ECO:0000255" key="2">
    <source>
        <dbReference type="PROSITE-ProRule" id="PRU00133"/>
    </source>
</evidence>
<evidence type="ECO:0000255" key="3">
    <source>
        <dbReference type="PROSITE-ProRule" id="PRU00541"/>
    </source>
</evidence>
<evidence type="ECO:0000255" key="4">
    <source>
        <dbReference type="PROSITE-ProRule" id="PRU00542"/>
    </source>
</evidence>
<evidence type="ECO:0000255" key="5">
    <source>
        <dbReference type="PROSITE-ProRule" id="PRU00549"/>
    </source>
</evidence>
<evidence type="ECO:0000255" key="6">
    <source>
        <dbReference type="PROSITE-ProRule" id="PRU00768"/>
    </source>
</evidence>
<evidence type="ECO:0000256" key="7">
    <source>
        <dbReference type="SAM" id="MobiDB-lite"/>
    </source>
</evidence>
<evidence type="ECO:0000269" key="8">
    <source>
    </source>
</evidence>
<evidence type="ECO:0000269" key="9">
    <source>
    </source>
</evidence>
<evidence type="ECO:0000269" key="10">
    <source>
    </source>
</evidence>
<evidence type="ECO:0000269" key="11">
    <source>
    </source>
</evidence>
<evidence type="ECO:0000269" key="12">
    <source>
    </source>
</evidence>
<evidence type="ECO:0000269" key="13">
    <source>
    </source>
</evidence>
<evidence type="ECO:0000303" key="14">
    <source>
    </source>
</evidence>
<evidence type="ECO:0000305" key="15"/>
<sequence>MASKGGKSKPDIVMASKSGKSKPDNESRAKRQKTLEAPKEPRRPKTHWDHVLEEMAWLSKDFESERKWKLAQAKKVALRASKGMLDQASREERKLKEEEQRLRKVALNISKDMKKFWMKVEKLVLYKHQLVRNEKKKKAMDKQLEFLLGQTERYSTMLAENLVEPYKQGQNTPSKPLLTIESKSDEERAEQIPPEINSSAGLESGSPELDEDYDLKSEDETEDDEDTIEEDEKHFTKRERQEELEALQNEVDLPVEELLRRYTSGRVSRETSPVKDENEDNLTSVSRVTSPVKDENQDNLASVGQDHGEDKNNLAASEETEGNPSVRRSNDSYGHLAISETHSHDLEPGMTTASVKSRKEDHTYDFNDEQEDVDFVLANGEEKDDEATLAVEEELAKADNEDHVEEIALLQKESEMPIEVLLARYKEDFGGKDISEDESESSFAVSEDSIVDSDENRQQADLDDDNVDLTECKLDPEPCSENVEGTFHEVAEDNDKDSSDKIADAAAAARSAQPTGFTYSTTKVRTKLPFLLKHSLREYQHIGLDWLVTMYEKKLNGILADEMGLGKTIMTIALLAHLACDKGIWGPHLIVVPTSVMLNWETEFLKWCPAFKILTYFGSAKERKLKRQGWMKLNSFHVCITTYRLVIQDSKMFKRKKWKYLILDEAHLIKNWKSQRWQTLLNFNSKRRILLTGTPLQNDLMELWSLMHFLMPHVFQSHQEFKDWFCNPIAGMVEGQEKINKEVIDRLHNVLRPFLLRRLKRDVEKQLPSKHEHVIFCRLSKRQRNLYEDFIASTETQATLTSGSFFGMISIIMQLRKVCNHPDLFEGRPIVSSFDMAGIDVQLSSTICSLLLESPFSKVDLEALGFLFTHLDFSMTSWEGDEIKAISTPSELIKQRVNLKDDLEAIPLSPKNRKNLQGTNIFEEIRKAVFEERIQESKDRAAAIAWWNSLRCQRKPTYSTSLRTLLTIKGPLDDLKANCSSYMYSSILADIVLSPIERFQKMIELVEAFTFAIPAARVPSPTCWCSKSDSPVFLSPSYKEKVTDLLSPLLSPIRPAIVRRQVYFPDRRLIQFDCGKLQELAMLLRKLKFGGHRALIFTQMTKMLDVLEAFINLYGYTYMRLDGSTPPEERQTLMQRFNTNPKIFLFILSTRSGGVGINLVGADTVIFYDSDWNPAMDQQAQDRCHRIGQTREVHIYRLISESTIEENILKKANQKRVLDNLVIQNGEYNTEFFKKLDPMELFSGHKALTTKDEKETSKHCGADIPLSNADVEAALKQAEDEADYMALKRVEQEEAVDNQEFTEEPVERPEDDELVNEDDIKADEPADQGLVAAGPAKEEMSLLHSDIRDERAVITTSSQEDDTDVLDDVKQMAAAAADAGQAISSFENQLRPIDRYAIRFLELWDPIIVEAAMENEAGFEEKEWELDHIEKYKEEMEAEIDDGEEPLVYEKWDADFATEAYRQQVEVLAQHQLMEDLENEAREREAAEVAEMVLTQNESAHVLKPKKKKKAKKAKYKSLKKGSLAAESKHVKSVVKIEDSTDDDNEEFGYVSSSDSDMVTPLSRMHMKGKKRDLIVDTDEEKTSKKKAKKHKKSLPNSDIKYKQTSALLDELEPSKPSDSMVVDNELKLTNRGKTVGKKFITSMPIKRVLMIKPEKLKKGNLWSRDCVPSPDSWLPQEDAILCAMVHEYGPNWNFVSGTLYGMTAGGAYRGRYRHPAYCCERYRELIQRHILSASDSAVNEKNLNTGSGKALLKVTEENIRTLLNVAAEQPDTEMLLQKHFSCLLSSIWRTSTRTGNDQMLSLNSPIFNRQFMGSVNHTQDLARKPWQGMKVTSLSRKLLESALQDSGPSQPDNTISRSRLQETQPINKLGLELTLEFPRGNDDSLNQFPPMISLSIDGSDSLNYVNEPPGEDVLKGSRVAAENRYRNAANACIEDSFGWASNTFPANDLKSRTGTKAQSLGKHKLSASDSAKSTKSKHRKLLAEQLEGAWVRPNDPNLKFDFTPGDREEEEEQEVDEKANSAEIEMISCSQWYDPFFTSGLDDCSLASDISEIE</sequence>
<gene>
    <name type="primary">PIE1</name>
    <name evidence="14" type="synonym">CHR13</name>
    <name type="ordered locus">At3g12810</name>
    <name type="ORF">MBK21.19</name>
</gene>
<accession>Q7X9V2</accession>
<accession>Q9LTV5</accession>
<protein>
    <recommendedName>
        <fullName>Protein PHOTOPERIOD-INDEPENDENT EARLY FLOWERING 1</fullName>
        <ecNumber>3.6.4.12</ecNumber>
    </recommendedName>
    <alternativeName>
        <fullName>Independent early flowering 1 protein</fullName>
    </alternativeName>
    <alternativeName>
        <fullName evidence="14">Protein CHROMATIN REMODELING 13</fullName>
        <shortName>AtCHR13</shortName>
    </alternativeName>
</protein>
<keyword id="KW-0067">ATP-binding</keyword>
<keyword id="KW-0156">Chromatin regulator</keyword>
<keyword id="KW-0175">Coiled coil</keyword>
<keyword id="KW-0217">Developmental protein</keyword>
<keyword id="KW-0221">Differentiation</keyword>
<keyword id="KW-0238">DNA-binding</keyword>
<keyword id="KW-0287">Flowering</keyword>
<keyword id="KW-0347">Helicase</keyword>
<keyword id="KW-0378">Hydrolase</keyword>
<keyword id="KW-0547">Nucleotide-binding</keyword>
<keyword id="KW-0539">Nucleus</keyword>
<keyword id="KW-1185">Reference proteome</keyword>
<keyword id="KW-0677">Repeat</keyword>
<feature type="chain" id="PRO_0000423729" description="Protein PHOTOPERIOD-INDEPENDENT EARLY FLOWERING 1">
    <location>
        <begin position="1"/>
        <end position="2055"/>
    </location>
</feature>
<feature type="domain" description="HSA" evidence="5">
    <location>
        <begin position="35"/>
        <end position="107"/>
    </location>
</feature>
<feature type="domain" description="Helicase ATP-binding" evidence="3">
    <location>
        <begin position="548"/>
        <end position="713"/>
    </location>
</feature>
<feature type="domain" description="Helicase C-terminal" evidence="4">
    <location>
        <begin position="1076"/>
        <end position="1229"/>
    </location>
</feature>
<feature type="domain" description="Myb-like" evidence="2">
    <location>
        <begin position="1673"/>
        <end position="1727"/>
    </location>
</feature>
<feature type="region of interest" description="Disordered" evidence="7">
    <location>
        <begin position="1"/>
        <end position="47"/>
    </location>
</feature>
<feature type="region of interest" description="Disordered" evidence="7">
    <location>
        <begin position="183"/>
        <end position="332"/>
    </location>
</feature>
<feature type="region of interest" description="Disordered" evidence="7">
    <location>
        <begin position="340"/>
        <end position="359"/>
    </location>
</feature>
<feature type="region of interest" description="Disordered" evidence="7">
    <location>
        <begin position="432"/>
        <end position="461"/>
    </location>
</feature>
<feature type="region of interest" description="Disordered" evidence="7">
    <location>
        <begin position="1293"/>
        <end position="1313"/>
    </location>
</feature>
<feature type="region of interest" description="Disordered" evidence="7">
    <location>
        <begin position="1577"/>
        <end position="1597"/>
    </location>
</feature>
<feature type="region of interest" description="Disordered" evidence="7">
    <location>
        <begin position="1843"/>
        <end position="1864"/>
    </location>
</feature>
<feature type="region of interest" description="Disordered" evidence="7">
    <location>
        <begin position="1951"/>
        <end position="1977"/>
    </location>
</feature>
<feature type="coiled-coil region" evidence="1">
    <location>
        <begin position="78"/>
        <end position="147"/>
    </location>
</feature>
<feature type="coiled-coil region" evidence="1">
    <location>
        <begin position="229"/>
        <end position="250"/>
    </location>
</feature>
<feature type="coiled-coil region" evidence="1">
    <location>
        <begin position="392"/>
        <end position="416"/>
    </location>
</feature>
<feature type="coiled-coil region" evidence="1">
    <location>
        <begin position="1419"/>
        <end position="1492"/>
    </location>
</feature>
<feature type="coiled-coil region" evidence="1">
    <location>
        <begin position="2006"/>
        <end position="2029"/>
    </location>
</feature>
<feature type="short sequence motif" description="Nuclear localization signal 1" evidence="6">
    <location>
        <begin position="29"/>
        <end position="36"/>
    </location>
</feature>
<feature type="short sequence motif" description="DEAH box">
    <location>
        <begin position="664"/>
        <end position="667"/>
    </location>
</feature>
<feature type="short sequence motif" description="Nuclear localization signal 2" evidence="6">
    <location>
        <begin position="1506"/>
        <end position="1513"/>
    </location>
</feature>
<feature type="short sequence motif" description="Nuclear localization signal 3" evidence="6">
    <location>
        <begin position="1570"/>
        <end position="1577"/>
    </location>
</feature>
<feature type="compositionally biased region" description="Basic and acidic residues" evidence="7">
    <location>
        <begin position="21"/>
        <end position="47"/>
    </location>
</feature>
<feature type="compositionally biased region" description="Acidic residues" evidence="7">
    <location>
        <begin position="208"/>
        <end position="230"/>
    </location>
</feature>
<feature type="compositionally biased region" description="Basic and acidic residues" evidence="7">
    <location>
        <begin position="231"/>
        <end position="243"/>
    </location>
</feature>
<feature type="compositionally biased region" description="Basic and acidic residues" evidence="7">
    <location>
        <begin position="267"/>
        <end position="276"/>
    </location>
</feature>
<feature type="compositionally biased region" description="Basic residues" evidence="7">
    <location>
        <begin position="1584"/>
        <end position="1594"/>
    </location>
</feature>
<feature type="compositionally biased region" description="Polar residues" evidence="7">
    <location>
        <begin position="1844"/>
        <end position="1864"/>
    </location>
</feature>
<feature type="binding site" evidence="3">
    <location>
        <begin position="561"/>
        <end position="568"/>
    </location>
    <ligand>
        <name>ATP</name>
        <dbReference type="ChEBI" id="CHEBI:30616"/>
    </ligand>
</feature>
<organism>
    <name type="scientific">Arabidopsis thaliana</name>
    <name type="common">Mouse-ear cress</name>
    <dbReference type="NCBI Taxonomy" id="3702"/>
    <lineage>
        <taxon>Eukaryota</taxon>
        <taxon>Viridiplantae</taxon>
        <taxon>Streptophyta</taxon>
        <taxon>Embryophyta</taxon>
        <taxon>Tracheophyta</taxon>
        <taxon>Spermatophyta</taxon>
        <taxon>Magnoliopsida</taxon>
        <taxon>eudicotyledons</taxon>
        <taxon>Gunneridae</taxon>
        <taxon>Pentapetalae</taxon>
        <taxon>rosids</taxon>
        <taxon>malvids</taxon>
        <taxon>Brassicales</taxon>
        <taxon>Brassicaceae</taxon>
        <taxon>Camelineae</taxon>
        <taxon>Arabidopsis</taxon>
    </lineage>
</organism>
<comment type="function">
    <text evidence="8 10 12 13">Component of the SWR1 complex which mediates the ATP-dependent exchange of histone H2A for the H2A variant H2A.F/Z leading to transcriptional regulation of selected genes (e.g. FLC) by chromatin remodeling. Probable DNA-dependent ATPase. Not involved in the repression of FLC in gametophytes, but required for the reactivation of FLC in early embryos and for the maintenance of full activation of FLC in late embryos.</text>
</comment>
<comment type="catalytic activity">
    <reaction>
        <text>ATP + H2O = ADP + phosphate + H(+)</text>
        <dbReference type="Rhea" id="RHEA:13065"/>
        <dbReference type="ChEBI" id="CHEBI:15377"/>
        <dbReference type="ChEBI" id="CHEBI:15378"/>
        <dbReference type="ChEBI" id="CHEBI:30616"/>
        <dbReference type="ChEBI" id="CHEBI:43474"/>
        <dbReference type="ChEBI" id="CHEBI:456216"/>
        <dbReference type="EC" id="3.6.4.12"/>
    </reaction>
</comment>
<comment type="subunit">
    <text evidence="9 10 11 12">Component of the SWR1 chromatin-remodeling complex composed of at least ARP6/ESD1/SUF3, PIE1, SWC6, SWC2 and H2AZs (HTA8, HTA9, HTA11). Interacts (via c-terminus) with SWC6 and ARP6 and (via N-terminus) with H2AZs.</text>
</comment>
<comment type="interaction">
    <interactant intactId="EBI-1537462">
        <id>Q7X9V2</id>
    </interactant>
    <interactant intactId="EBI-1537316">
        <id>Q8LGE3</id>
        <label>ARP6</label>
    </interactant>
    <organismsDiffer>false</organismsDiffer>
    <experiments>4</experiments>
</comment>
<comment type="interaction">
    <interactant intactId="EBI-1537462">
        <id>Q7X9V2</id>
    </interactant>
    <interactant intactId="EBI-1537353">
        <id>Q9FHW2</id>
        <label>SWC6</label>
    </interactant>
    <organismsDiffer>false</organismsDiffer>
    <experiments>4</experiments>
</comment>
<comment type="subcellular location">
    <subcellularLocation>
        <location evidence="5">Nucleus</location>
    </subcellularLocation>
</comment>
<comment type="tissue specificity">
    <text evidence="13">Expressed in ovules, but not in stamens.</text>
</comment>
<comment type="induction">
    <text evidence="13">Not regulated by vernalization.</text>
</comment>
<comment type="disruption phenotype">
    <text evidence="8 10">Early flowering. Loss of H2A.Z from chromatin.</text>
</comment>
<comment type="similarity">
    <text evidence="15">Belongs to the SNF2/RAD54 helicase family. SWR1 subfamily.</text>
</comment>
<comment type="sequence caution" evidence="15">
    <conflict type="erroneous gene model prediction">
        <sequence resource="EMBL-CDS" id="BAB02425"/>
    </conflict>
</comment>
<name>PIE1_ARATH</name>
<proteinExistence type="evidence at protein level"/>
<dbReference type="EC" id="3.6.4.12"/>
<dbReference type="EMBL" id="AY279398">
    <property type="protein sequence ID" value="AAP40633.1"/>
    <property type="molecule type" value="mRNA"/>
</dbReference>
<dbReference type="EMBL" id="AB024033">
    <property type="protein sequence ID" value="BAB02425.1"/>
    <property type="status" value="ALT_SEQ"/>
    <property type="molecule type" value="Genomic_DNA"/>
</dbReference>
<dbReference type="EMBL" id="CP002686">
    <property type="protein sequence ID" value="AEE75248.1"/>
    <property type="molecule type" value="Genomic_DNA"/>
</dbReference>
<dbReference type="RefSeq" id="NP_187887.3">
    <property type="nucleotide sequence ID" value="NM_112117.5"/>
</dbReference>
<dbReference type="SMR" id="Q7X9V2"/>
<dbReference type="BioGRID" id="5797">
    <property type="interactions" value="12"/>
</dbReference>
<dbReference type="FunCoup" id="Q7X9V2">
    <property type="interactions" value="2874"/>
</dbReference>
<dbReference type="IntAct" id="Q7X9V2">
    <property type="interactions" value="6"/>
</dbReference>
<dbReference type="STRING" id="3702.Q7X9V2"/>
<dbReference type="iPTMnet" id="Q7X9V2"/>
<dbReference type="PaxDb" id="3702-AT3G12810.1"/>
<dbReference type="ProteomicsDB" id="236732"/>
<dbReference type="EnsemblPlants" id="AT3G12810.1">
    <property type="protein sequence ID" value="AT3G12810.1"/>
    <property type="gene ID" value="AT3G12810"/>
</dbReference>
<dbReference type="GeneID" id="820463"/>
<dbReference type="Gramene" id="AT3G12810.1">
    <property type="protein sequence ID" value="AT3G12810.1"/>
    <property type="gene ID" value="AT3G12810"/>
</dbReference>
<dbReference type="KEGG" id="ath:AT3G12810"/>
<dbReference type="Araport" id="AT3G12810"/>
<dbReference type="TAIR" id="AT3G12810">
    <property type="gene designation" value="PIE1"/>
</dbReference>
<dbReference type="eggNOG" id="KOG0391">
    <property type="taxonomic scope" value="Eukaryota"/>
</dbReference>
<dbReference type="HOGENOM" id="CLU_000315_13_1_1"/>
<dbReference type="InParanoid" id="Q7X9V2"/>
<dbReference type="OMA" id="QKDGYAD"/>
<dbReference type="PhylomeDB" id="Q7X9V2"/>
<dbReference type="PRO" id="PR:Q7X9V2"/>
<dbReference type="Proteomes" id="UP000006548">
    <property type="component" value="Chromosome 3"/>
</dbReference>
<dbReference type="ExpressionAtlas" id="Q7X9V2">
    <property type="expression patterns" value="baseline and differential"/>
</dbReference>
<dbReference type="GO" id="GO:0009505">
    <property type="term" value="C:plant-type cell wall"/>
    <property type="evidence" value="ECO:0007005"/>
    <property type="project" value="TAIR"/>
</dbReference>
<dbReference type="GO" id="GO:0016514">
    <property type="term" value="C:SWI/SNF complex"/>
    <property type="evidence" value="ECO:0000250"/>
    <property type="project" value="TAIR"/>
</dbReference>
<dbReference type="GO" id="GO:0000812">
    <property type="term" value="C:Swr1 complex"/>
    <property type="evidence" value="ECO:0000314"/>
    <property type="project" value="TAIR"/>
</dbReference>
<dbReference type="GO" id="GO:0005524">
    <property type="term" value="F:ATP binding"/>
    <property type="evidence" value="ECO:0007669"/>
    <property type="project" value="UniProtKB-KW"/>
</dbReference>
<dbReference type="GO" id="GO:0016887">
    <property type="term" value="F:ATP hydrolysis activity"/>
    <property type="evidence" value="ECO:0007669"/>
    <property type="project" value="RHEA"/>
</dbReference>
<dbReference type="GO" id="GO:0003677">
    <property type="term" value="F:DNA binding"/>
    <property type="evidence" value="ECO:0007669"/>
    <property type="project" value="UniProtKB-KW"/>
</dbReference>
<dbReference type="GO" id="GO:0004386">
    <property type="term" value="F:helicase activity"/>
    <property type="evidence" value="ECO:0007669"/>
    <property type="project" value="UniProtKB-KW"/>
</dbReference>
<dbReference type="GO" id="GO:0030154">
    <property type="term" value="P:cell differentiation"/>
    <property type="evidence" value="ECO:0007669"/>
    <property type="project" value="UniProtKB-KW"/>
</dbReference>
<dbReference type="GO" id="GO:0006325">
    <property type="term" value="P:chromatin organization"/>
    <property type="evidence" value="ECO:0007669"/>
    <property type="project" value="UniProtKB-KW"/>
</dbReference>
<dbReference type="GO" id="GO:0009908">
    <property type="term" value="P:flower development"/>
    <property type="evidence" value="ECO:0007669"/>
    <property type="project" value="UniProtKB-KW"/>
</dbReference>
<dbReference type="GO" id="GO:0046686">
    <property type="term" value="P:response to cadmium ion"/>
    <property type="evidence" value="ECO:0000270"/>
    <property type="project" value="TAIR"/>
</dbReference>
<dbReference type="CDD" id="cd18003">
    <property type="entry name" value="DEXQc_SRCAP"/>
    <property type="match status" value="1"/>
</dbReference>
<dbReference type="CDD" id="cd18793">
    <property type="entry name" value="SF2_C_SNF"/>
    <property type="match status" value="1"/>
</dbReference>
<dbReference type="FunFam" id="3.40.50.10810:FF:000005">
    <property type="entry name" value="Photoperiod-independent early flowering 1"/>
    <property type="match status" value="1"/>
</dbReference>
<dbReference type="FunFam" id="1.20.120.850:FF:000006">
    <property type="entry name" value="Protein PHOTOPERIOD-INDEPENDENT EARLY FLOWERING 1"/>
    <property type="match status" value="1"/>
</dbReference>
<dbReference type="FunFam" id="3.40.50.300:FF:000655">
    <property type="entry name" value="Protein PHOTOPERIOD-INDEPENDENT EARLY FLOWERING 1"/>
    <property type="match status" value="1"/>
</dbReference>
<dbReference type="Gene3D" id="1.10.10.60">
    <property type="entry name" value="Homeodomain-like"/>
    <property type="match status" value="1"/>
</dbReference>
<dbReference type="Gene3D" id="3.40.50.300">
    <property type="entry name" value="P-loop containing nucleotide triphosphate hydrolases"/>
    <property type="match status" value="1"/>
</dbReference>
<dbReference type="Gene3D" id="1.20.120.850">
    <property type="entry name" value="SWI2/SNF2 ATPases, N-terminal domain"/>
    <property type="match status" value="1"/>
</dbReference>
<dbReference type="Gene3D" id="3.40.50.10810">
    <property type="entry name" value="Tandem AAA-ATPase domain"/>
    <property type="match status" value="1"/>
</dbReference>
<dbReference type="InterPro" id="IPR014001">
    <property type="entry name" value="Helicase_ATP-bd"/>
</dbReference>
<dbReference type="InterPro" id="IPR001650">
    <property type="entry name" value="Helicase_C-like"/>
</dbReference>
<dbReference type="InterPro" id="IPR014012">
    <property type="entry name" value="HSA_dom"/>
</dbReference>
<dbReference type="InterPro" id="IPR050520">
    <property type="entry name" value="INO80/SWR1_helicase"/>
</dbReference>
<dbReference type="InterPro" id="IPR027417">
    <property type="entry name" value="P-loop_NTPase"/>
</dbReference>
<dbReference type="InterPro" id="IPR001005">
    <property type="entry name" value="SANT/Myb"/>
</dbReference>
<dbReference type="InterPro" id="IPR038718">
    <property type="entry name" value="SNF2-like_sf"/>
</dbReference>
<dbReference type="InterPro" id="IPR049730">
    <property type="entry name" value="SNF2/RAD54-like_C"/>
</dbReference>
<dbReference type="InterPro" id="IPR000330">
    <property type="entry name" value="SNF2_N"/>
</dbReference>
<dbReference type="PANTHER" id="PTHR45685:SF1">
    <property type="entry name" value="HELICASE SRCAP"/>
    <property type="match status" value="1"/>
</dbReference>
<dbReference type="PANTHER" id="PTHR45685">
    <property type="entry name" value="HELICASE SRCAP-RELATED"/>
    <property type="match status" value="1"/>
</dbReference>
<dbReference type="Pfam" id="PF00271">
    <property type="entry name" value="Helicase_C"/>
    <property type="match status" value="1"/>
</dbReference>
<dbReference type="Pfam" id="PF07529">
    <property type="entry name" value="HSA"/>
    <property type="match status" value="1"/>
</dbReference>
<dbReference type="Pfam" id="PF00176">
    <property type="entry name" value="SNF2-rel_dom"/>
    <property type="match status" value="1"/>
</dbReference>
<dbReference type="SMART" id="SM00487">
    <property type="entry name" value="DEXDc"/>
    <property type="match status" value="1"/>
</dbReference>
<dbReference type="SMART" id="SM00490">
    <property type="entry name" value="HELICc"/>
    <property type="match status" value="1"/>
</dbReference>
<dbReference type="SMART" id="SM00573">
    <property type="entry name" value="HSA"/>
    <property type="match status" value="1"/>
</dbReference>
<dbReference type="SUPFAM" id="SSF52540">
    <property type="entry name" value="P-loop containing nucleoside triphosphate hydrolases"/>
    <property type="match status" value="2"/>
</dbReference>
<dbReference type="PROSITE" id="PS51192">
    <property type="entry name" value="HELICASE_ATP_BIND_1"/>
    <property type="match status" value="1"/>
</dbReference>
<dbReference type="PROSITE" id="PS51194">
    <property type="entry name" value="HELICASE_CTER"/>
    <property type="match status" value="1"/>
</dbReference>
<dbReference type="PROSITE" id="PS51204">
    <property type="entry name" value="HSA"/>
    <property type="match status" value="1"/>
</dbReference>
<dbReference type="PROSITE" id="PS50090">
    <property type="entry name" value="MYB_LIKE"/>
    <property type="match status" value="1"/>
</dbReference>
<reference key="1">
    <citation type="journal article" date="2003" name="Plant Cell">
        <title>PIE1, an ISWI family gene, is required for FLC activation and floral repression in Arabidopsis.</title>
        <authorList>
            <person name="Noh Y.-S."/>
            <person name="Amasino R.M."/>
        </authorList>
    </citation>
    <scope>NUCLEOTIDE SEQUENCE [MRNA]</scope>
    <scope>FUNCTION</scope>
    <scope>DISRUPTION PHENOTYPE</scope>
</reference>
<reference key="2">
    <citation type="journal article" date="2000" name="DNA Res.">
        <title>Structural analysis of Arabidopsis thaliana chromosome 3. I. Sequence features of the regions of 4,504,864 bp covered by sixty P1 and TAC clones.</title>
        <authorList>
            <person name="Sato S."/>
            <person name="Nakamura Y."/>
            <person name="Kaneko T."/>
            <person name="Katoh T."/>
            <person name="Asamizu E."/>
            <person name="Tabata S."/>
        </authorList>
    </citation>
    <scope>NUCLEOTIDE SEQUENCE [LARGE SCALE GENOMIC DNA]</scope>
    <source>
        <strain>cv. Columbia</strain>
    </source>
</reference>
<reference key="3">
    <citation type="journal article" date="2017" name="Plant J.">
        <title>Araport11: a complete reannotation of the Arabidopsis thaliana reference genome.</title>
        <authorList>
            <person name="Cheng C.Y."/>
            <person name="Krishnakumar V."/>
            <person name="Chan A.P."/>
            <person name="Thibaud-Nissen F."/>
            <person name="Schobel S."/>
            <person name="Town C.D."/>
        </authorList>
    </citation>
    <scope>GENOME REANNOTATION</scope>
    <source>
        <strain>cv. Columbia</strain>
    </source>
</reference>
<reference key="4">
    <citation type="journal article" date="2006" name="Genetics">
        <title>Involvement of the Arabidopsis SWI2/SNF2 chromatin remodeling gene family in DNA damage response and recombination.</title>
        <authorList>
            <person name="Shaked H."/>
            <person name="Avivi-Ragolsky N."/>
            <person name="Levy A.A."/>
        </authorList>
    </citation>
    <scope>GENE FAMILY</scope>
    <scope>NOMENCLATURE</scope>
</reference>
<reference key="5">
    <citation type="journal article" date="2007" name="Development">
        <title>Arabidopsis homologs of components of the SWR1 complex regulate flowering and plant development.</title>
        <authorList>
            <person name="Choi K."/>
            <person name="Park C."/>
            <person name="Lee J."/>
            <person name="Oh M."/>
            <person name="Noh B."/>
            <person name="Lee I."/>
        </authorList>
    </citation>
    <scope>INTERACTION WITH ARP6; SWC6 AND H2A.F/Z PROTEINS</scope>
</reference>
<reference key="6">
    <citation type="journal article" date="2007" name="Plant Cell">
        <title>Repression of flowering in Arabidopsis requires activation of FLOWERING LOCUS C expression by the histone variant H2A.Z.</title>
        <authorList>
            <person name="Deal R.B."/>
            <person name="Topp C.N."/>
            <person name="McKinney E.C."/>
            <person name="Meagher R.B."/>
        </authorList>
    </citation>
    <scope>FUNCTION</scope>
    <scope>DISRUPTION PHENOTYPE</scope>
    <scope>IDENTIFICATION IN THE SWR1 COMPLEX</scope>
</reference>
<reference key="7">
    <citation type="journal article" date="2007" name="Plant Physiol.">
        <title>SEF, a new protein required for flowering repression in Arabidopsis, interacts with PIE1 and ARP6.</title>
        <authorList>
            <person name="March-Diaz R."/>
            <person name="Garcia-Dominguez M."/>
            <person name="Florencio F.J."/>
            <person name="Reyes J.C."/>
        </authorList>
    </citation>
    <scope>INTERACTION WITH SWC6 AND ARP6</scope>
</reference>
<reference key="8">
    <citation type="journal article" date="2008" name="Plant J.">
        <title>Histone H2A.Z and homologues of components of the SWR1 complex are required to control immunity in Arabidopsis.</title>
        <authorList>
            <person name="March-Diaz R."/>
            <person name="Garcia-Dominguez M."/>
            <person name="Lozano-Juste J."/>
            <person name="Leon J."/>
            <person name="Florencio F.J."/>
            <person name="Reyes J.C."/>
        </authorList>
    </citation>
    <scope>FUNCTION</scope>
    <scope>INTERACTION WITH H2A.F/Z PROTEINS</scope>
</reference>
<reference key="9">
    <citation type="journal article" date="2009" name="Plant J.">
        <title>Resetting and regulation of Flowering Locus C expression during Arabidopsis reproductive development.</title>
        <authorList>
            <person name="Choi J."/>
            <person name="Hyun Y."/>
            <person name="Kang M.J."/>
            <person name="In Yun H."/>
            <person name="Yun J.Y."/>
            <person name="Lister C."/>
            <person name="Dean C."/>
            <person name="Amasino R.M."/>
            <person name="Noh B."/>
            <person name="Noh Y.S."/>
            <person name="Choi Y."/>
        </authorList>
    </citation>
    <scope>FUNCTION</scope>
    <scope>INDUCTION BY VERNALIZATION</scope>
    <scope>TISSUE SPECIFICITY</scope>
</reference>
<reference key="10">
    <citation type="journal article" date="2013" name="PLoS ONE">
        <title>Genome-wide comparative in silico analysis of the RNA helicase gene family in Zea mays and Glycine max: a comparison with Arabidopsis and Oryza sativa.</title>
        <authorList>
            <person name="Xu R."/>
            <person name="Zhang S."/>
            <person name="Huang J."/>
            <person name="Zheng C."/>
        </authorList>
    </citation>
    <scope>GENE FAMILY</scope>
</reference>